<sequence length="433" mass="48044">MNSEPKPGLAMSSHFMGTDNQDQYKGTYAMNRLSIANLLNSPSSTLPTGNDFQNFGLERQINEGVLPQLLQNPWAINFWLQFQNAQLQPHLQYAALACSLVTENPLDLSNKTMNMLQKIGVFNSVTKSEDDESVAPEKPVDESLNKSNILRRNYTVEDLTQAVEDIRQGKLGTRRASVVYGIPRSTLRNKIYKLEAEGAIPSKVRRGKIAARRAEAEQKRCVEATAAAALLDAFGNQSDSSSSSPHASMCPSSPDSTNSSLEGTGETPEMSDKKSCSPLDPKWLESIWQNLFKTQGNVVPVDSANISNVDTHTPTPISEKSQKMHGNEEWKRSRPKRGQYRKYDKNALDEAVRSVRRGEMTVHRAGSFFGVPHSTLEYKVKERNLMRKKKDCLYSHDSSTSEDGSQLVTSTISEKSDSSSHTSTPIPFPISLV</sequence>
<proteinExistence type="evidence at transcript level"/>
<organism evidence="9">
    <name type="scientific">Caenorhabditis elegans</name>
    <dbReference type="NCBI Taxonomy" id="6239"/>
    <lineage>
        <taxon>Eukaryota</taxon>
        <taxon>Metazoa</taxon>
        <taxon>Ecdysozoa</taxon>
        <taxon>Nematoda</taxon>
        <taxon>Chromadorea</taxon>
        <taxon>Rhabditida</taxon>
        <taxon>Rhabditina</taxon>
        <taxon>Rhabditomorpha</taxon>
        <taxon>Rhabditoidea</taxon>
        <taxon>Rhabditidae</taxon>
        <taxon>Peloderinae</taxon>
        <taxon>Caenorhabditis</taxon>
    </lineage>
</organism>
<keyword id="KW-0238">DNA-binding</keyword>
<keyword id="KW-0524">Neurogenesis</keyword>
<keyword id="KW-0539">Nucleus</keyword>
<keyword id="KW-1185">Reference proteome</keyword>
<keyword id="KW-0677">Repeat</keyword>
<keyword id="KW-0804">Transcription</keyword>
<keyword id="KW-0805">Transcription regulation</keyword>
<comment type="function">
    <text evidence="1 4 5">May act as transcription activator (By similarity). Plays a role in neurogenesis by regulating neurite pruning between left and right AIM neurons and left and right RIF neurons during larval development (PubMed:16139210, PubMed:19561603). Regulates olfactory plasticity (PubMed:19561603).</text>
</comment>
<comment type="subcellular location">
    <subcellularLocation>
        <location evidence="4">Nucleus</location>
    </subcellularLocation>
</comment>
<comment type="tissue specificity">
    <text evidence="4 5">Expressed in AIM, RIC, AIZ, ADF, ADL, ASK, AWA, AUA, AIN, RIH (or RIR) and RIF head neurons and, in PVP, PVQ and DVA (or DVC) tail neurons, some intestinal cells, somatic gonad and vulva.</text>
</comment>
<comment type="developmental stage">
    <text evidence="4">Expressed at the comma stage and throughout larval stages and in adult.</text>
</comment>
<comment type="disruption phenotype">
    <text evidence="4 5">The left and right AIM neurons and the left and right RIF neurons are connected by abnormal neurites in 40% and 80% of adults respectively (PubMed:16139210, PubMed:19561603). Fails to reduce chemotaxis to benzaldehyde after pre-exposure to benzaldehyde (PubMed:19561603). In mbr-1 and cam-1 double mutants, normal neurite pruning between left and right AIM neurons is restored (PubMed:19561603).</text>
</comment>
<accession>G5EGQ5</accession>
<feature type="chain" id="PRO_0000437684" description="Mblk-1-related factor 1" evidence="7">
    <location>
        <begin position="1"/>
        <end position="433"/>
    </location>
</feature>
<feature type="domain" description="HTH psq-type 1" evidence="2">
    <location>
        <begin position="145"/>
        <end position="197"/>
    </location>
</feature>
<feature type="domain" description="HTH psq-type 2" evidence="2">
    <location>
        <begin position="334"/>
        <end position="386"/>
    </location>
</feature>
<feature type="DNA-binding region" description="H-T-H motif" evidence="2">
    <location>
        <begin position="173"/>
        <end position="193"/>
    </location>
</feature>
<feature type="DNA-binding region" description="H-T-H motif" evidence="2">
    <location>
        <begin position="362"/>
        <end position="382"/>
    </location>
</feature>
<feature type="region of interest" description="Disordered" evidence="3">
    <location>
        <begin position="235"/>
        <end position="278"/>
    </location>
</feature>
<feature type="region of interest" description="Disordered" evidence="3">
    <location>
        <begin position="304"/>
        <end position="338"/>
    </location>
</feature>
<feature type="region of interest" description="Disordered" evidence="3">
    <location>
        <begin position="393"/>
        <end position="433"/>
    </location>
</feature>
<feature type="compositionally biased region" description="Low complexity" evidence="3">
    <location>
        <begin position="235"/>
        <end position="254"/>
    </location>
</feature>
<feature type="compositionally biased region" description="Polar residues" evidence="3">
    <location>
        <begin position="304"/>
        <end position="319"/>
    </location>
</feature>
<feature type="compositionally biased region" description="Basic and acidic residues" evidence="3">
    <location>
        <begin position="320"/>
        <end position="332"/>
    </location>
</feature>
<feature type="compositionally biased region" description="Polar residues" evidence="3">
    <location>
        <begin position="396"/>
        <end position="408"/>
    </location>
</feature>
<feature type="compositionally biased region" description="Low complexity" evidence="3">
    <location>
        <begin position="409"/>
        <end position="424"/>
    </location>
</feature>
<evidence type="ECO:0000250" key="1">
    <source>
        <dbReference type="UniProtKB" id="Q95YM8"/>
    </source>
</evidence>
<evidence type="ECO:0000255" key="2">
    <source>
        <dbReference type="PROSITE-ProRule" id="PRU00320"/>
    </source>
</evidence>
<evidence type="ECO:0000256" key="3">
    <source>
        <dbReference type="SAM" id="MobiDB-lite"/>
    </source>
</evidence>
<evidence type="ECO:0000269" key="4">
    <source>
    </source>
</evidence>
<evidence type="ECO:0000269" key="5">
    <source>
    </source>
</evidence>
<evidence type="ECO:0000303" key="6">
    <source>
    </source>
</evidence>
<evidence type="ECO:0000305" key="7"/>
<evidence type="ECO:0000312" key="8">
    <source>
        <dbReference type="EMBL" id="BAE45265.1"/>
    </source>
</evidence>
<evidence type="ECO:0000312" key="9">
    <source>
        <dbReference type="Proteomes" id="UP000001940"/>
    </source>
</evidence>
<evidence type="ECO:0000312" key="10">
    <source>
        <dbReference type="WormBase" id="T01C1.2"/>
    </source>
</evidence>
<gene>
    <name evidence="10" type="primary">mbr-1</name>
    <name evidence="10" type="ORF">T01C1.2</name>
</gene>
<reference evidence="8" key="1">
    <citation type="journal article" date="2005" name="Curr. Biol.">
        <title>MBR-1, a novel helix-turn-helix transcription factor, is required for pruning excessive neurites in Caenorhabditis elegans.</title>
        <authorList>
            <person name="Kage E."/>
            <person name="Hayashi Y."/>
            <person name="Takeuchi H."/>
            <person name="Hirotsu T."/>
            <person name="Kunitomo H."/>
            <person name="Inoue T."/>
            <person name="Arai H."/>
            <person name="Iino Y."/>
            <person name="Kubo T."/>
        </authorList>
    </citation>
    <scope>NUCLEOTIDE SEQUENCE [MRNA]</scope>
    <scope>FUNCTION</scope>
    <scope>SUBCELLULAR LOCATION</scope>
    <scope>TISSUE SPECIFICITY</scope>
    <scope>DEVELOPMENTAL STAGE</scope>
    <scope>DISRUPTION PHENOTYPE</scope>
    <source>
        <strain evidence="8">Bristol N2</strain>
    </source>
</reference>
<reference evidence="9" key="2">
    <citation type="journal article" date="1998" name="Science">
        <title>Genome sequence of the nematode C. elegans: a platform for investigating biology.</title>
        <authorList>
            <consortium name="The C. elegans sequencing consortium"/>
        </authorList>
    </citation>
    <scope>NUCLEOTIDE SEQUENCE [LARGE SCALE GENOMIC DNA]</scope>
    <source>
        <strain evidence="9">Bristol N2</strain>
    </source>
</reference>
<reference evidence="7" key="3">
    <citation type="journal article" date="2009" name="Nat. Neurosci.">
        <title>A trophic role for Wnt-Ror kinase signaling during developmental pruning in Caenorhabditis elegans.</title>
        <authorList>
            <person name="Hayashi Y."/>
            <person name="Hirotsu T."/>
            <person name="Iwata R."/>
            <person name="Kage-Nakadai E."/>
            <person name="Kunitomo H."/>
            <person name="Ishihara T."/>
            <person name="Iino Y."/>
            <person name="Kubo T."/>
        </authorList>
    </citation>
    <scope>FUNCTION</scope>
    <scope>TISSUE SPECIFICITY</scope>
    <scope>DISRUPTION PHENOTYPE</scope>
</reference>
<protein>
    <recommendedName>
        <fullName evidence="6">Mblk-1-related factor 1</fullName>
    </recommendedName>
</protein>
<name>MBR1_CAEEL</name>
<dbReference type="EMBL" id="AB236333">
    <property type="protein sequence ID" value="BAE45265.1"/>
    <property type="molecule type" value="mRNA"/>
</dbReference>
<dbReference type="EMBL" id="BX284606">
    <property type="protein sequence ID" value="CAA92010.2"/>
    <property type="molecule type" value="Genomic_DNA"/>
</dbReference>
<dbReference type="PIR" id="T24277">
    <property type="entry name" value="T24277"/>
</dbReference>
<dbReference type="RefSeq" id="NP_509794.2">
    <property type="nucleotide sequence ID" value="NM_077393.8"/>
</dbReference>
<dbReference type="SMR" id="G5EGQ5"/>
<dbReference type="FunCoup" id="G5EGQ5">
    <property type="interactions" value="983"/>
</dbReference>
<dbReference type="STRING" id="6239.T01C1.2.1"/>
<dbReference type="PaxDb" id="6239-T01C1.2"/>
<dbReference type="EnsemblMetazoa" id="T01C1.2.1">
    <property type="protein sequence ID" value="T01C1.2.1"/>
    <property type="gene ID" value="WBGene00011315"/>
</dbReference>
<dbReference type="GeneID" id="187937"/>
<dbReference type="KEGG" id="cel:CELE_T01C1.2"/>
<dbReference type="AGR" id="WB:WBGene00011315"/>
<dbReference type="CTD" id="187937"/>
<dbReference type="WormBase" id="T01C1.2">
    <property type="protein sequence ID" value="CE39173"/>
    <property type="gene ID" value="WBGene00011315"/>
    <property type="gene designation" value="mbr-1"/>
</dbReference>
<dbReference type="eggNOG" id="KOG4565">
    <property type="taxonomic scope" value="Eukaryota"/>
</dbReference>
<dbReference type="GeneTree" id="ENSGT00940000172051"/>
<dbReference type="HOGENOM" id="CLU_036655_0_0_1"/>
<dbReference type="InParanoid" id="G5EGQ5"/>
<dbReference type="OMA" id="KWLESIW"/>
<dbReference type="OrthoDB" id="10028342at2759"/>
<dbReference type="PhylomeDB" id="G5EGQ5"/>
<dbReference type="PRO" id="PR:G5EGQ5"/>
<dbReference type="Proteomes" id="UP000001940">
    <property type="component" value="Chromosome X"/>
</dbReference>
<dbReference type="Bgee" id="WBGene00011315">
    <property type="expression patterns" value="Expressed in larva and 4 other cell types or tissues"/>
</dbReference>
<dbReference type="GO" id="GO:0005634">
    <property type="term" value="C:nucleus"/>
    <property type="evidence" value="ECO:0000318"/>
    <property type="project" value="GO_Central"/>
</dbReference>
<dbReference type="GO" id="GO:0003677">
    <property type="term" value="F:DNA binding"/>
    <property type="evidence" value="ECO:0007669"/>
    <property type="project" value="UniProtKB-KW"/>
</dbReference>
<dbReference type="GO" id="GO:0007399">
    <property type="term" value="P:nervous system development"/>
    <property type="evidence" value="ECO:0007669"/>
    <property type="project" value="UniProtKB-KW"/>
</dbReference>
<dbReference type="GO" id="GO:0006357">
    <property type="term" value="P:regulation of transcription by RNA polymerase II"/>
    <property type="evidence" value="ECO:0000318"/>
    <property type="project" value="GO_Central"/>
</dbReference>
<dbReference type="FunFam" id="1.10.10.60:FF:000019">
    <property type="entry name" value="Ligand-dependent corepressor isoform 1"/>
    <property type="match status" value="1"/>
</dbReference>
<dbReference type="Gene3D" id="1.10.10.60">
    <property type="entry name" value="Homeodomain-like"/>
    <property type="match status" value="2"/>
</dbReference>
<dbReference type="InterPro" id="IPR009057">
    <property type="entry name" value="Homeodomain-like_sf"/>
</dbReference>
<dbReference type="InterPro" id="IPR007889">
    <property type="entry name" value="HTH_Psq"/>
</dbReference>
<dbReference type="PANTHER" id="PTHR21545:SF13">
    <property type="entry name" value="ECDYSONE-INDUCED PROTEIN 93F, ISOFORM C"/>
    <property type="match status" value="1"/>
</dbReference>
<dbReference type="PANTHER" id="PTHR21545">
    <property type="entry name" value="TRANSCRIPTION FACTOR MLR1/2"/>
    <property type="match status" value="1"/>
</dbReference>
<dbReference type="Pfam" id="PF05225">
    <property type="entry name" value="HTH_psq"/>
    <property type="match status" value="2"/>
</dbReference>
<dbReference type="SUPFAM" id="SSF46689">
    <property type="entry name" value="Homeodomain-like"/>
    <property type="match status" value="2"/>
</dbReference>
<dbReference type="PROSITE" id="PS50960">
    <property type="entry name" value="HTH_PSQ"/>
    <property type="match status" value="2"/>
</dbReference>